<gene>
    <name evidence="1" type="primary">atpA</name>
    <name type="ordered locus">lhv_0810</name>
</gene>
<reference key="1">
    <citation type="journal article" date="2008" name="J. Bacteriol.">
        <title>Genome sequence of Lactobacillus helveticus: an organism distinguished by selective gene loss and IS element expansion.</title>
        <authorList>
            <person name="Callanan M."/>
            <person name="Kaleta P."/>
            <person name="O'Callaghan J."/>
            <person name="O'Sullivan O."/>
            <person name="Jordan K."/>
            <person name="McAuliffe O."/>
            <person name="Sangrador-Vegas A."/>
            <person name="Slattery L."/>
            <person name="Fitzgerald G.F."/>
            <person name="Beresford T."/>
            <person name="Ross R.P."/>
        </authorList>
    </citation>
    <scope>NUCLEOTIDE SEQUENCE [LARGE SCALE GENOMIC DNA]</scope>
    <source>
        <strain>DPC 4571</strain>
    </source>
</reference>
<proteinExistence type="inferred from homology"/>
<protein>
    <recommendedName>
        <fullName evidence="1">ATP synthase subunit alpha</fullName>
        <ecNumber evidence="1">7.1.2.2</ecNumber>
    </recommendedName>
    <alternativeName>
        <fullName evidence="1">ATP synthase F1 sector subunit alpha</fullName>
    </alternativeName>
    <alternativeName>
        <fullName evidence="1">F-ATPase subunit alpha</fullName>
    </alternativeName>
</protein>
<sequence length="503" mass="54889">MSIKAEEISSLIKQQLEHYDDKLDINEVGVVTYVGDGIARAHGLNNALAGELLKFDNGSYGIAQNLDSSDVGIIILGQFDNIREGDRVQRTGRIMSVPVGDALIGRVVNPLGQPVDGLGEIKSDKTRPIEEKAPGVMDRQSVNQPLQTGIKAIDALVPIGRGQRELIIGDRKTGKTSLAIDTILNQKNQDVICIYVAIGQKESTVRTQVETLKRFGAMDYTIVVEAGPSEPAPMLYIAPYAGTAMGEEFMYNGKDVLIVFDDLSKQAVAYRELSLLLRRPPGREAYPGDVFYLHSRLLERSAKLSDKLGGGSLTALPIIQTEAGDISAYIPTNVISITDGQIFLQSDLFFAGTRPAIDAGNSVSRVGGNAQIKAMKKVAGTLRTDLAAYRELESFAQFGSDLDQATQAKLNRGQRTVEVLKQPLHDPIPVEKQVLILYALTHGYLDSIPVEDISRFQNELFDNFDSSHADLLKTIRETGKLPDDKKLSAAIEEFSESFAPSEK</sequence>
<name>ATPA_LACH4</name>
<keyword id="KW-0066">ATP synthesis</keyword>
<keyword id="KW-0067">ATP-binding</keyword>
<keyword id="KW-1003">Cell membrane</keyword>
<keyword id="KW-0139">CF(1)</keyword>
<keyword id="KW-0375">Hydrogen ion transport</keyword>
<keyword id="KW-0406">Ion transport</keyword>
<keyword id="KW-0472">Membrane</keyword>
<keyword id="KW-0547">Nucleotide-binding</keyword>
<keyword id="KW-1278">Translocase</keyword>
<keyword id="KW-0813">Transport</keyword>
<feature type="chain" id="PRO_1000073356" description="ATP synthase subunit alpha">
    <location>
        <begin position="1"/>
        <end position="503"/>
    </location>
</feature>
<feature type="binding site" evidence="1">
    <location>
        <begin position="169"/>
        <end position="176"/>
    </location>
    <ligand>
        <name>ATP</name>
        <dbReference type="ChEBI" id="CHEBI:30616"/>
    </ligand>
</feature>
<feature type="site" description="Required for activity" evidence="1">
    <location>
        <position position="362"/>
    </location>
</feature>
<evidence type="ECO:0000255" key="1">
    <source>
        <dbReference type="HAMAP-Rule" id="MF_01346"/>
    </source>
</evidence>
<accession>A8YUJ9</accession>
<dbReference type="EC" id="7.1.2.2" evidence="1"/>
<dbReference type="EMBL" id="CP000517">
    <property type="protein sequence ID" value="ABX26937.1"/>
    <property type="molecule type" value="Genomic_DNA"/>
</dbReference>
<dbReference type="RefSeq" id="WP_012211671.1">
    <property type="nucleotide sequence ID" value="NC_010080.1"/>
</dbReference>
<dbReference type="SMR" id="A8YUJ9"/>
<dbReference type="GeneID" id="83724605"/>
<dbReference type="KEGG" id="lhe:lhv_0810"/>
<dbReference type="eggNOG" id="COG0056">
    <property type="taxonomic scope" value="Bacteria"/>
</dbReference>
<dbReference type="HOGENOM" id="CLU_010091_2_1_9"/>
<dbReference type="Proteomes" id="UP000000790">
    <property type="component" value="Chromosome"/>
</dbReference>
<dbReference type="GO" id="GO:0005886">
    <property type="term" value="C:plasma membrane"/>
    <property type="evidence" value="ECO:0007669"/>
    <property type="project" value="UniProtKB-SubCell"/>
</dbReference>
<dbReference type="GO" id="GO:0045259">
    <property type="term" value="C:proton-transporting ATP synthase complex"/>
    <property type="evidence" value="ECO:0007669"/>
    <property type="project" value="UniProtKB-KW"/>
</dbReference>
<dbReference type="GO" id="GO:0043531">
    <property type="term" value="F:ADP binding"/>
    <property type="evidence" value="ECO:0007669"/>
    <property type="project" value="TreeGrafter"/>
</dbReference>
<dbReference type="GO" id="GO:0005524">
    <property type="term" value="F:ATP binding"/>
    <property type="evidence" value="ECO:0007669"/>
    <property type="project" value="UniProtKB-UniRule"/>
</dbReference>
<dbReference type="GO" id="GO:0046933">
    <property type="term" value="F:proton-transporting ATP synthase activity, rotational mechanism"/>
    <property type="evidence" value="ECO:0007669"/>
    <property type="project" value="UniProtKB-UniRule"/>
</dbReference>
<dbReference type="CDD" id="cd18113">
    <property type="entry name" value="ATP-synt_F1_alpha_C"/>
    <property type="match status" value="1"/>
</dbReference>
<dbReference type="CDD" id="cd18116">
    <property type="entry name" value="ATP-synt_F1_alpha_N"/>
    <property type="match status" value="1"/>
</dbReference>
<dbReference type="CDD" id="cd01132">
    <property type="entry name" value="F1-ATPase_alpha_CD"/>
    <property type="match status" value="1"/>
</dbReference>
<dbReference type="FunFam" id="1.20.150.20:FF:000001">
    <property type="entry name" value="ATP synthase subunit alpha"/>
    <property type="match status" value="1"/>
</dbReference>
<dbReference type="FunFam" id="2.40.30.20:FF:000001">
    <property type="entry name" value="ATP synthase subunit alpha"/>
    <property type="match status" value="1"/>
</dbReference>
<dbReference type="FunFam" id="3.40.50.300:FF:000002">
    <property type="entry name" value="ATP synthase subunit alpha"/>
    <property type="match status" value="1"/>
</dbReference>
<dbReference type="Gene3D" id="2.40.30.20">
    <property type="match status" value="1"/>
</dbReference>
<dbReference type="Gene3D" id="1.20.150.20">
    <property type="entry name" value="ATP synthase alpha/beta chain, C-terminal domain"/>
    <property type="match status" value="1"/>
</dbReference>
<dbReference type="Gene3D" id="3.40.50.300">
    <property type="entry name" value="P-loop containing nucleotide triphosphate hydrolases"/>
    <property type="match status" value="1"/>
</dbReference>
<dbReference type="HAMAP" id="MF_01346">
    <property type="entry name" value="ATP_synth_alpha_bact"/>
    <property type="match status" value="1"/>
</dbReference>
<dbReference type="InterPro" id="IPR023366">
    <property type="entry name" value="ATP_synth_asu-like_sf"/>
</dbReference>
<dbReference type="InterPro" id="IPR000793">
    <property type="entry name" value="ATP_synth_asu_C"/>
</dbReference>
<dbReference type="InterPro" id="IPR038376">
    <property type="entry name" value="ATP_synth_asu_C_sf"/>
</dbReference>
<dbReference type="InterPro" id="IPR033732">
    <property type="entry name" value="ATP_synth_F1_a_nt-bd_dom"/>
</dbReference>
<dbReference type="InterPro" id="IPR005294">
    <property type="entry name" value="ATP_synth_F1_asu"/>
</dbReference>
<dbReference type="InterPro" id="IPR020003">
    <property type="entry name" value="ATPase_a/bsu_AS"/>
</dbReference>
<dbReference type="InterPro" id="IPR004100">
    <property type="entry name" value="ATPase_F1/V1/A1_a/bsu_N"/>
</dbReference>
<dbReference type="InterPro" id="IPR036121">
    <property type="entry name" value="ATPase_F1/V1/A1_a/bsu_N_sf"/>
</dbReference>
<dbReference type="InterPro" id="IPR000194">
    <property type="entry name" value="ATPase_F1/V1/A1_a/bsu_nucl-bd"/>
</dbReference>
<dbReference type="InterPro" id="IPR027417">
    <property type="entry name" value="P-loop_NTPase"/>
</dbReference>
<dbReference type="NCBIfam" id="TIGR00962">
    <property type="entry name" value="atpA"/>
    <property type="match status" value="1"/>
</dbReference>
<dbReference type="NCBIfam" id="NF009884">
    <property type="entry name" value="PRK13343.1"/>
    <property type="match status" value="1"/>
</dbReference>
<dbReference type="PANTHER" id="PTHR48082">
    <property type="entry name" value="ATP SYNTHASE SUBUNIT ALPHA, MITOCHONDRIAL"/>
    <property type="match status" value="1"/>
</dbReference>
<dbReference type="PANTHER" id="PTHR48082:SF2">
    <property type="entry name" value="ATP SYNTHASE SUBUNIT ALPHA, MITOCHONDRIAL"/>
    <property type="match status" value="1"/>
</dbReference>
<dbReference type="Pfam" id="PF00006">
    <property type="entry name" value="ATP-synt_ab"/>
    <property type="match status" value="1"/>
</dbReference>
<dbReference type="Pfam" id="PF00306">
    <property type="entry name" value="ATP-synt_ab_C"/>
    <property type="match status" value="1"/>
</dbReference>
<dbReference type="Pfam" id="PF02874">
    <property type="entry name" value="ATP-synt_ab_N"/>
    <property type="match status" value="1"/>
</dbReference>
<dbReference type="PIRSF" id="PIRSF039088">
    <property type="entry name" value="F_ATPase_subunit_alpha"/>
    <property type="match status" value="1"/>
</dbReference>
<dbReference type="SUPFAM" id="SSF47917">
    <property type="entry name" value="C-terminal domain of alpha and beta subunits of F1 ATP synthase"/>
    <property type="match status" value="1"/>
</dbReference>
<dbReference type="SUPFAM" id="SSF50615">
    <property type="entry name" value="N-terminal domain of alpha and beta subunits of F1 ATP synthase"/>
    <property type="match status" value="1"/>
</dbReference>
<dbReference type="SUPFAM" id="SSF52540">
    <property type="entry name" value="P-loop containing nucleoside triphosphate hydrolases"/>
    <property type="match status" value="1"/>
</dbReference>
<dbReference type="PROSITE" id="PS00152">
    <property type="entry name" value="ATPASE_ALPHA_BETA"/>
    <property type="match status" value="1"/>
</dbReference>
<organism>
    <name type="scientific">Lactobacillus helveticus (strain DPC 4571)</name>
    <dbReference type="NCBI Taxonomy" id="405566"/>
    <lineage>
        <taxon>Bacteria</taxon>
        <taxon>Bacillati</taxon>
        <taxon>Bacillota</taxon>
        <taxon>Bacilli</taxon>
        <taxon>Lactobacillales</taxon>
        <taxon>Lactobacillaceae</taxon>
        <taxon>Lactobacillus</taxon>
    </lineage>
</organism>
<comment type="function">
    <text evidence="1">Produces ATP from ADP in the presence of a proton gradient across the membrane. The alpha chain is a regulatory subunit.</text>
</comment>
<comment type="catalytic activity">
    <reaction evidence="1">
        <text>ATP + H2O + 4 H(+)(in) = ADP + phosphate + 5 H(+)(out)</text>
        <dbReference type="Rhea" id="RHEA:57720"/>
        <dbReference type="ChEBI" id="CHEBI:15377"/>
        <dbReference type="ChEBI" id="CHEBI:15378"/>
        <dbReference type="ChEBI" id="CHEBI:30616"/>
        <dbReference type="ChEBI" id="CHEBI:43474"/>
        <dbReference type="ChEBI" id="CHEBI:456216"/>
        <dbReference type="EC" id="7.1.2.2"/>
    </reaction>
</comment>
<comment type="subunit">
    <text evidence="1">F-type ATPases have 2 components, CF(1) - the catalytic core - and CF(0) - the membrane proton channel. CF(1) has five subunits: alpha(3), beta(3), gamma(1), delta(1), epsilon(1). CF(0) has three main subunits: a(1), b(2) and c(9-12). The alpha and beta chains form an alternating ring which encloses part of the gamma chain. CF(1) is attached to CF(0) by a central stalk formed by the gamma and epsilon chains, while a peripheral stalk is formed by the delta and b chains.</text>
</comment>
<comment type="subcellular location">
    <subcellularLocation>
        <location evidence="1">Cell membrane</location>
        <topology evidence="1">Peripheral membrane protein</topology>
    </subcellularLocation>
</comment>
<comment type="similarity">
    <text evidence="1">Belongs to the ATPase alpha/beta chains family.</text>
</comment>